<evidence type="ECO:0000255" key="1">
    <source>
        <dbReference type="HAMAP-Rule" id="MF_00095"/>
    </source>
</evidence>
<accession>B1IDX1</accession>
<proteinExistence type="inferred from homology"/>
<comment type="similarity">
    <text evidence="1">Belongs to the SfsA family.</text>
</comment>
<name>SFSA_CLOBK</name>
<protein>
    <recommendedName>
        <fullName evidence="1">Sugar fermentation stimulation protein homolog</fullName>
    </recommendedName>
</protein>
<feature type="chain" id="PRO_1000093568" description="Sugar fermentation stimulation protein homolog">
    <location>
        <begin position="1"/>
        <end position="230"/>
    </location>
</feature>
<dbReference type="EMBL" id="CP000939">
    <property type="protein sequence ID" value="ACA44560.1"/>
    <property type="molecule type" value="Genomic_DNA"/>
</dbReference>
<dbReference type="RefSeq" id="WP_003400112.1">
    <property type="nucleotide sequence ID" value="NC_010516.1"/>
</dbReference>
<dbReference type="SMR" id="B1IDX1"/>
<dbReference type="KEGG" id="cbb:CLD_0781"/>
<dbReference type="HOGENOM" id="CLU_052299_1_0_9"/>
<dbReference type="Proteomes" id="UP000008541">
    <property type="component" value="Chromosome"/>
</dbReference>
<dbReference type="GO" id="GO:0003677">
    <property type="term" value="F:DNA binding"/>
    <property type="evidence" value="ECO:0007669"/>
    <property type="project" value="InterPro"/>
</dbReference>
<dbReference type="CDD" id="cd22359">
    <property type="entry name" value="SfsA-like_bacterial"/>
    <property type="match status" value="1"/>
</dbReference>
<dbReference type="FunFam" id="2.40.50.580:FF:000002">
    <property type="entry name" value="Sugar fermentation stimulation protein homolog"/>
    <property type="match status" value="1"/>
</dbReference>
<dbReference type="FunFam" id="3.40.1350.60:FF:000002">
    <property type="entry name" value="Sugar fermentation stimulation protein homolog"/>
    <property type="match status" value="1"/>
</dbReference>
<dbReference type="Gene3D" id="2.40.50.580">
    <property type="match status" value="1"/>
</dbReference>
<dbReference type="Gene3D" id="3.40.1350.60">
    <property type="match status" value="1"/>
</dbReference>
<dbReference type="HAMAP" id="MF_00095">
    <property type="entry name" value="SfsA"/>
    <property type="match status" value="1"/>
</dbReference>
<dbReference type="InterPro" id="IPR005224">
    <property type="entry name" value="SfsA"/>
</dbReference>
<dbReference type="InterPro" id="IPR040452">
    <property type="entry name" value="SfsA_C"/>
</dbReference>
<dbReference type="InterPro" id="IPR041465">
    <property type="entry name" value="SfsA_N"/>
</dbReference>
<dbReference type="NCBIfam" id="TIGR00230">
    <property type="entry name" value="sfsA"/>
    <property type="match status" value="1"/>
</dbReference>
<dbReference type="PANTHER" id="PTHR30545">
    <property type="entry name" value="SUGAR FERMENTATION STIMULATION PROTEIN A"/>
    <property type="match status" value="1"/>
</dbReference>
<dbReference type="PANTHER" id="PTHR30545:SF2">
    <property type="entry name" value="SUGAR FERMENTATION STIMULATION PROTEIN A"/>
    <property type="match status" value="1"/>
</dbReference>
<dbReference type="Pfam" id="PF03749">
    <property type="entry name" value="SfsA"/>
    <property type="match status" value="1"/>
</dbReference>
<dbReference type="Pfam" id="PF17746">
    <property type="entry name" value="SfsA_N"/>
    <property type="match status" value="1"/>
</dbReference>
<reference key="1">
    <citation type="journal article" date="2007" name="PLoS ONE">
        <title>Analysis of the neurotoxin complex genes in Clostridium botulinum A1-A4 and B1 strains: BoNT/A3, /Ba4 and /B1 clusters are located within plasmids.</title>
        <authorList>
            <person name="Smith T.J."/>
            <person name="Hill K.K."/>
            <person name="Foley B.T."/>
            <person name="Detter J.C."/>
            <person name="Munk A.C."/>
            <person name="Bruce D.C."/>
            <person name="Doggett N.A."/>
            <person name="Smith L.A."/>
            <person name="Marks J.D."/>
            <person name="Xie G."/>
            <person name="Brettin T.S."/>
        </authorList>
    </citation>
    <scope>NUCLEOTIDE SEQUENCE [LARGE SCALE GENOMIC DNA]</scope>
    <source>
        <strain>Okra / Type B1</strain>
    </source>
</reference>
<sequence length="230" mass="26319">MKITKNILKAEFIKRPNRFQAYVKINEKIEMVHVPNTGRCKEILIPGSTVILREENNENRKTRYDLIAGYKGDMLISIDSQIPNKVVYEALMNFKIEILKEYTNIKREKTFGKSRFDFKLEKENGEVYYLEVKGVTLENDGLTMFPDAPTERGTKHILELIDVKNKGMGAGVLFLIQLNGVKKFTPNHKMDKNFGEALKLAKEKGVDILAYDCLVEESSISLNNPVSIEI</sequence>
<organism>
    <name type="scientific">Clostridium botulinum (strain Okra / Type B1)</name>
    <dbReference type="NCBI Taxonomy" id="498213"/>
    <lineage>
        <taxon>Bacteria</taxon>
        <taxon>Bacillati</taxon>
        <taxon>Bacillota</taxon>
        <taxon>Clostridia</taxon>
        <taxon>Eubacteriales</taxon>
        <taxon>Clostridiaceae</taxon>
        <taxon>Clostridium</taxon>
    </lineage>
</organism>
<gene>
    <name evidence="1" type="primary">sfsA</name>
    <name type="ordered locus">CLD_0781</name>
</gene>